<name>RL33_AROAE</name>
<proteinExistence type="inferred from homology"/>
<organism>
    <name type="scientific">Aromatoleum aromaticum (strain DSM 19018 / LMG 30748 / EbN1)</name>
    <name type="common">Azoarcus sp. (strain EbN1)</name>
    <dbReference type="NCBI Taxonomy" id="76114"/>
    <lineage>
        <taxon>Bacteria</taxon>
        <taxon>Pseudomonadati</taxon>
        <taxon>Pseudomonadota</taxon>
        <taxon>Betaproteobacteria</taxon>
        <taxon>Rhodocyclales</taxon>
        <taxon>Rhodocyclaceae</taxon>
        <taxon>Aromatoleum</taxon>
    </lineage>
</organism>
<accession>Q5P1Z8</accession>
<gene>
    <name evidence="1" type="primary">rpmG</name>
    <name type="ordered locus">AZOSEA25410</name>
    <name type="ORF">ebC6</name>
</gene>
<sequence length="55" mass="6395">MAKGAREKIKLESTAGTGHFYTTSKNKRTTPNKLEFNKYDPVVRKHVLYKEIKLK</sequence>
<keyword id="KW-1185">Reference proteome</keyword>
<keyword id="KW-0687">Ribonucleoprotein</keyword>
<keyword id="KW-0689">Ribosomal protein</keyword>
<protein>
    <recommendedName>
        <fullName evidence="1">Large ribosomal subunit protein bL33</fullName>
    </recommendedName>
    <alternativeName>
        <fullName evidence="2">50S ribosomal protein L33</fullName>
    </alternativeName>
</protein>
<reference key="1">
    <citation type="journal article" date="2005" name="Arch. Microbiol.">
        <title>The genome sequence of an anaerobic aromatic-degrading denitrifying bacterium, strain EbN1.</title>
        <authorList>
            <person name="Rabus R."/>
            <person name="Kube M."/>
            <person name="Heider J."/>
            <person name="Beck A."/>
            <person name="Heitmann K."/>
            <person name="Widdel F."/>
            <person name="Reinhardt R."/>
        </authorList>
    </citation>
    <scope>NUCLEOTIDE SEQUENCE [LARGE SCALE GENOMIC DNA]</scope>
    <source>
        <strain>DSM 19018 / LMG 30748 / EbN1</strain>
    </source>
</reference>
<evidence type="ECO:0000255" key="1">
    <source>
        <dbReference type="HAMAP-Rule" id="MF_00294"/>
    </source>
</evidence>
<evidence type="ECO:0000305" key="2"/>
<comment type="similarity">
    <text evidence="1">Belongs to the bacterial ribosomal protein bL33 family.</text>
</comment>
<feature type="chain" id="PRO_1000004144" description="Large ribosomal subunit protein bL33">
    <location>
        <begin position="1"/>
        <end position="55"/>
    </location>
</feature>
<dbReference type="EMBL" id="CR555306">
    <property type="protein sequence ID" value="CAI08666.1"/>
    <property type="molecule type" value="Genomic_DNA"/>
</dbReference>
<dbReference type="RefSeq" id="WP_011238350.1">
    <property type="nucleotide sequence ID" value="NC_006513.1"/>
</dbReference>
<dbReference type="SMR" id="Q5P1Z8"/>
<dbReference type="STRING" id="76114.ebC6"/>
<dbReference type="KEGG" id="eba:ebC6"/>
<dbReference type="eggNOG" id="COG0267">
    <property type="taxonomic scope" value="Bacteria"/>
</dbReference>
<dbReference type="HOGENOM" id="CLU_190949_1_1_4"/>
<dbReference type="OrthoDB" id="21586at2"/>
<dbReference type="Proteomes" id="UP000006552">
    <property type="component" value="Chromosome"/>
</dbReference>
<dbReference type="GO" id="GO:0022625">
    <property type="term" value="C:cytosolic large ribosomal subunit"/>
    <property type="evidence" value="ECO:0007669"/>
    <property type="project" value="TreeGrafter"/>
</dbReference>
<dbReference type="GO" id="GO:0003735">
    <property type="term" value="F:structural constituent of ribosome"/>
    <property type="evidence" value="ECO:0007669"/>
    <property type="project" value="InterPro"/>
</dbReference>
<dbReference type="GO" id="GO:0006412">
    <property type="term" value="P:translation"/>
    <property type="evidence" value="ECO:0007669"/>
    <property type="project" value="UniProtKB-UniRule"/>
</dbReference>
<dbReference type="FunFam" id="2.20.28.120:FF:000001">
    <property type="entry name" value="50S ribosomal protein L33"/>
    <property type="match status" value="1"/>
</dbReference>
<dbReference type="Gene3D" id="2.20.28.120">
    <property type="entry name" value="Ribosomal protein L33"/>
    <property type="match status" value="1"/>
</dbReference>
<dbReference type="HAMAP" id="MF_00294">
    <property type="entry name" value="Ribosomal_bL33"/>
    <property type="match status" value="1"/>
</dbReference>
<dbReference type="InterPro" id="IPR001705">
    <property type="entry name" value="Ribosomal_bL33"/>
</dbReference>
<dbReference type="InterPro" id="IPR018264">
    <property type="entry name" value="Ribosomal_bL33_CS"/>
</dbReference>
<dbReference type="InterPro" id="IPR038584">
    <property type="entry name" value="Ribosomal_bL33_sf"/>
</dbReference>
<dbReference type="InterPro" id="IPR011332">
    <property type="entry name" value="Ribosomal_zn-bd"/>
</dbReference>
<dbReference type="NCBIfam" id="NF001764">
    <property type="entry name" value="PRK00504.1"/>
    <property type="match status" value="1"/>
</dbReference>
<dbReference type="NCBIfam" id="NF001860">
    <property type="entry name" value="PRK00595.1"/>
    <property type="match status" value="1"/>
</dbReference>
<dbReference type="NCBIfam" id="TIGR01023">
    <property type="entry name" value="rpmG_bact"/>
    <property type="match status" value="1"/>
</dbReference>
<dbReference type="PANTHER" id="PTHR15238">
    <property type="entry name" value="54S RIBOSOMAL PROTEIN L39, MITOCHONDRIAL"/>
    <property type="match status" value="1"/>
</dbReference>
<dbReference type="PANTHER" id="PTHR15238:SF1">
    <property type="entry name" value="LARGE RIBOSOMAL SUBUNIT PROTEIN BL33M"/>
    <property type="match status" value="1"/>
</dbReference>
<dbReference type="Pfam" id="PF00471">
    <property type="entry name" value="Ribosomal_L33"/>
    <property type="match status" value="1"/>
</dbReference>
<dbReference type="SUPFAM" id="SSF57829">
    <property type="entry name" value="Zn-binding ribosomal proteins"/>
    <property type="match status" value="1"/>
</dbReference>
<dbReference type="PROSITE" id="PS00582">
    <property type="entry name" value="RIBOSOMAL_L33"/>
    <property type="match status" value="1"/>
</dbReference>